<accession>B0TUN8</accession>
<reference key="1">
    <citation type="submission" date="2008-01" db="EMBL/GenBank/DDBJ databases">
        <title>Complete sequence of Shewanella halifaxensis HAW-EB4.</title>
        <authorList>
            <consortium name="US DOE Joint Genome Institute"/>
            <person name="Copeland A."/>
            <person name="Lucas S."/>
            <person name="Lapidus A."/>
            <person name="Glavina del Rio T."/>
            <person name="Dalin E."/>
            <person name="Tice H."/>
            <person name="Bruce D."/>
            <person name="Goodwin L."/>
            <person name="Pitluck S."/>
            <person name="Sims D."/>
            <person name="Brettin T."/>
            <person name="Detter J.C."/>
            <person name="Han C."/>
            <person name="Kuske C.R."/>
            <person name="Schmutz J."/>
            <person name="Larimer F."/>
            <person name="Land M."/>
            <person name="Hauser L."/>
            <person name="Kyrpides N."/>
            <person name="Kim E."/>
            <person name="Zhao J.-S."/>
            <person name="Richardson P."/>
        </authorList>
    </citation>
    <scope>NUCLEOTIDE SEQUENCE [LARGE SCALE GENOMIC DNA]</scope>
    <source>
        <strain>HAW-EB4</strain>
    </source>
</reference>
<name>TTCA_SHEHH</name>
<dbReference type="EC" id="2.8.1.-" evidence="1"/>
<dbReference type="EMBL" id="CP000931">
    <property type="protein sequence ID" value="ABZ76766.1"/>
    <property type="molecule type" value="Genomic_DNA"/>
</dbReference>
<dbReference type="RefSeq" id="WP_012277296.1">
    <property type="nucleotide sequence ID" value="NC_010334.1"/>
</dbReference>
<dbReference type="SMR" id="B0TUN8"/>
<dbReference type="STRING" id="458817.Shal_2207"/>
<dbReference type="KEGG" id="shl:Shal_2207"/>
<dbReference type="eggNOG" id="COG0037">
    <property type="taxonomic scope" value="Bacteria"/>
</dbReference>
<dbReference type="HOGENOM" id="CLU_026481_0_0_6"/>
<dbReference type="OrthoDB" id="9801054at2"/>
<dbReference type="Proteomes" id="UP000001317">
    <property type="component" value="Chromosome"/>
</dbReference>
<dbReference type="GO" id="GO:0005737">
    <property type="term" value="C:cytoplasm"/>
    <property type="evidence" value="ECO:0007669"/>
    <property type="project" value="UniProtKB-SubCell"/>
</dbReference>
<dbReference type="GO" id="GO:0051539">
    <property type="term" value="F:4 iron, 4 sulfur cluster binding"/>
    <property type="evidence" value="ECO:0007669"/>
    <property type="project" value="UniProtKB-UniRule"/>
</dbReference>
<dbReference type="GO" id="GO:0005524">
    <property type="term" value="F:ATP binding"/>
    <property type="evidence" value="ECO:0007669"/>
    <property type="project" value="UniProtKB-UniRule"/>
</dbReference>
<dbReference type="GO" id="GO:0000287">
    <property type="term" value="F:magnesium ion binding"/>
    <property type="evidence" value="ECO:0007669"/>
    <property type="project" value="UniProtKB-UniRule"/>
</dbReference>
<dbReference type="GO" id="GO:0016783">
    <property type="term" value="F:sulfurtransferase activity"/>
    <property type="evidence" value="ECO:0007669"/>
    <property type="project" value="UniProtKB-UniRule"/>
</dbReference>
<dbReference type="GO" id="GO:0000049">
    <property type="term" value="F:tRNA binding"/>
    <property type="evidence" value="ECO:0007669"/>
    <property type="project" value="UniProtKB-KW"/>
</dbReference>
<dbReference type="GO" id="GO:0034227">
    <property type="term" value="P:tRNA thio-modification"/>
    <property type="evidence" value="ECO:0007669"/>
    <property type="project" value="UniProtKB-UniRule"/>
</dbReference>
<dbReference type="CDD" id="cd24138">
    <property type="entry name" value="TtcA-like"/>
    <property type="match status" value="1"/>
</dbReference>
<dbReference type="Gene3D" id="3.40.50.620">
    <property type="entry name" value="HUPs"/>
    <property type="match status" value="1"/>
</dbReference>
<dbReference type="HAMAP" id="MF_01850">
    <property type="entry name" value="TtcA"/>
    <property type="match status" value="1"/>
</dbReference>
<dbReference type="InterPro" id="IPR014729">
    <property type="entry name" value="Rossmann-like_a/b/a_fold"/>
</dbReference>
<dbReference type="InterPro" id="IPR011063">
    <property type="entry name" value="TilS/TtcA_N"/>
</dbReference>
<dbReference type="InterPro" id="IPR012089">
    <property type="entry name" value="tRNA_Cyd_32_2_STrfase"/>
</dbReference>
<dbReference type="InterPro" id="IPR035107">
    <property type="entry name" value="tRNA_thiolation_TtcA_Ctu1"/>
</dbReference>
<dbReference type="NCBIfam" id="NF007972">
    <property type="entry name" value="PRK10696.1"/>
    <property type="match status" value="1"/>
</dbReference>
<dbReference type="PANTHER" id="PTHR43686:SF1">
    <property type="entry name" value="AMINOTRAN_5 DOMAIN-CONTAINING PROTEIN"/>
    <property type="match status" value="1"/>
</dbReference>
<dbReference type="PANTHER" id="PTHR43686">
    <property type="entry name" value="SULFURTRANSFERASE-RELATED"/>
    <property type="match status" value="1"/>
</dbReference>
<dbReference type="Pfam" id="PF01171">
    <property type="entry name" value="ATP_bind_3"/>
    <property type="match status" value="1"/>
</dbReference>
<dbReference type="PIRSF" id="PIRSF004976">
    <property type="entry name" value="ATPase_YdaO"/>
    <property type="match status" value="1"/>
</dbReference>
<dbReference type="SUPFAM" id="SSF52402">
    <property type="entry name" value="Adenine nucleotide alpha hydrolases-like"/>
    <property type="match status" value="1"/>
</dbReference>
<organism>
    <name type="scientific">Shewanella halifaxensis (strain HAW-EB4)</name>
    <dbReference type="NCBI Taxonomy" id="458817"/>
    <lineage>
        <taxon>Bacteria</taxon>
        <taxon>Pseudomonadati</taxon>
        <taxon>Pseudomonadota</taxon>
        <taxon>Gammaproteobacteria</taxon>
        <taxon>Alteromonadales</taxon>
        <taxon>Shewanellaceae</taxon>
        <taxon>Shewanella</taxon>
    </lineage>
</organism>
<evidence type="ECO:0000255" key="1">
    <source>
        <dbReference type="HAMAP-Rule" id="MF_01850"/>
    </source>
</evidence>
<feature type="chain" id="PRO_0000348837" description="tRNA-cytidine(32) 2-sulfurtransferase">
    <location>
        <begin position="1"/>
        <end position="311"/>
    </location>
</feature>
<feature type="short sequence motif" description="PP-loop motif" evidence="1">
    <location>
        <begin position="45"/>
        <end position="50"/>
    </location>
</feature>
<feature type="binding site" evidence="1">
    <location>
        <position position="120"/>
    </location>
    <ligand>
        <name>[4Fe-4S] cluster</name>
        <dbReference type="ChEBI" id="CHEBI:49883"/>
    </ligand>
</feature>
<feature type="binding site" evidence="1">
    <location>
        <position position="123"/>
    </location>
    <ligand>
        <name>[4Fe-4S] cluster</name>
        <dbReference type="ChEBI" id="CHEBI:49883"/>
    </ligand>
</feature>
<feature type="binding site" evidence="1">
    <location>
        <position position="211"/>
    </location>
    <ligand>
        <name>[4Fe-4S] cluster</name>
        <dbReference type="ChEBI" id="CHEBI:49883"/>
    </ligand>
</feature>
<gene>
    <name evidence="1" type="primary">ttcA</name>
    <name type="ordered locus">Shal_2207</name>
</gene>
<proteinExistence type="inferred from homology"/>
<comment type="function">
    <text evidence="1">Catalyzes the ATP-dependent 2-thiolation of cytidine in position 32 of tRNA, to form 2-thiocytidine (s(2)C32). The sulfur atoms are provided by the cysteine/cysteine desulfurase (IscS) system.</text>
</comment>
<comment type="catalytic activity">
    <reaction evidence="1">
        <text>cytidine(32) in tRNA + S-sulfanyl-L-cysteinyl-[cysteine desulfurase] + AH2 + ATP = 2-thiocytidine(32) in tRNA + L-cysteinyl-[cysteine desulfurase] + A + AMP + diphosphate + H(+)</text>
        <dbReference type="Rhea" id="RHEA:57048"/>
        <dbReference type="Rhea" id="RHEA-COMP:10288"/>
        <dbReference type="Rhea" id="RHEA-COMP:12157"/>
        <dbReference type="Rhea" id="RHEA-COMP:12158"/>
        <dbReference type="Rhea" id="RHEA-COMP:14821"/>
        <dbReference type="ChEBI" id="CHEBI:13193"/>
        <dbReference type="ChEBI" id="CHEBI:15378"/>
        <dbReference type="ChEBI" id="CHEBI:17499"/>
        <dbReference type="ChEBI" id="CHEBI:29950"/>
        <dbReference type="ChEBI" id="CHEBI:30616"/>
        <dbReference type="ChEBI" id="CHEBI:33019"/>
        <dbReference type="ChEBI" id="CHEBI:61963"/>
        <dbReference type="ChEBI" id="CHEBI:82748"/>
        <dbReference type="ChEBI" id="CHEBI:141453"/>
        <dbReference type="ChEBI" id="CHEBI:456215"/>
    </reaction>
    <physiologicalReaction direction="left-to-right" evidence="1">
        <dbReference type="Rhea" id="RHEA:57049"/>
    </physiologicalReaction>
</comment>
<comment type="cofactor">
    <cofactor evidence="1">
        <name>Mg(2+)</name>
        <dbReference type="ChEBI" id="CHEBI:18420"/>
    </cofactor>
</comment>
<comment type="cofactor">
    <cofactor evidence="1">
        <name>[4Fe-4S] cluster</name>
        <dbReference type="ChEBI" id="CHEBI:49883"/>
    </cofactor>
    <text evidence="1">Binds 1 [4Fe-4S] cluster per subunit. The cluster is chelated by three Cys residues, the fourth Fe has a free coordination site that may bind a sulfur atom transferred from the persulfide of IscS.</text>
</comment>
<comment type="pathway">
    <text evidence="1">tRNA modification.</text>
</comment>
<comment type="subunit">
    <text evidence="1">Homodimer.</text>
</comment>
<comment type="subcellular location">
    <subcellularLocation>
        <location evidence="1">Cytoplasm</location>
    </subcellularLocation>
</comment>
<comment type="miscellaneous">
    <text evidence="1">The thiolation reaction likely consists of two steps: a first activation step by ATP to form an adenylated intermediate of the target base of tRNA, and a second nucleophilic substitution step of the sulfur (S) atom supplied by the hydrosulfide attached to the Fe-S cluster.</text>
</comment>
<comment type="similarity">
    <text evidence="1">Belongs to the TtcA family.</text>
</comment>
<keyword id="KW-0004">4Fe-4S</keyword>
<keyword id="KW-0067">ATP-binding</keyword>
<keyword id="KW-0963">Cytoplasm</keyword>
<keyword id="KW-0408">Iron</keyword>
<keyword id="KW-0411">Iron-sulfur</keyword>
<keyword id="KW-0460">Magnesium</keyword>
<keyword id="KW-0479">Metal-binding</keyword>
<keyword id="KW-0547">Nucleotide-binding</keyword>
<keyword id="KW-0694">RNA-binding</keyword>
<keyword id="KW-0808">Transferase</keyword>
<keyword id="KW-0819">tRNA processing</keyword>
<keyword id="KW-0820">tRNA-binding</keyword>
<sequence>MSEELTPQQVTRMAKLQKRLRTEVGRAIGDYNMIEEGDRVMCCLSGGKDSYAMLDILLNLQQRAPIKFEIVAVNLDQKQPGFPEDILPAYLDTLGVAYHILEKDTYSIVKDKIPEGKTTCSLCSRLRRGTLYGFAQKIGATKIALGHHRDDIIETMFLNMFFAGKMKAMPPKLLSDDGANMVIRPLAYSREKDIAEYAGLKGFPIIPCNLCGSQENLKRAAVKEMLVQWDRDYPGRIETIFTAMQNTAPSQGVDREQFDFLSLTRDPDAPMRGDVAESDLPAFDFVDVANNGHINLDKAVRIDVVNTYTPD</sequence>
<protein>
    <recommendedName>
        <fullName evidence="1">tRNA-cytidine(32) 2-sulfurtransferase</fullName>
        <ecNumber evidence="1">2.8.1.-</ecNumber>
    </recommendedName>
    <alternativeName>
        <fullName evidence="1">Two-thiocytidine biosynthesis protein A</fullName>
    </alternativeName>
    <alternativeName>
        <fullName evidence="1">tRNA 2-thiocytidine biosynthesis protein TtcA</fullName>
    </alternativeName>
</protein>